<proteinExistence type="evidence at protein level"/>
<organism>
    <name type="scientific">Dothideomycetidae sp. (strain 11243)</name>
    <name type="common">Fungal sp. (strain No.11243)</name>
    <dbReference type="NCBI Taxonomy" id="1603295"/>
    <lineage>
        <taxon>Eukaryota</taxon>
        <taxon>Fungi</taxon>
        <taxon>Dikarya</taxon>
        <taxon>Ascomycota</taxon>
        <taxon>Pezizomycotina</taxon>
        <taxon>Dothideomycetes</taxon>
        <taxon>Dothideomycetidae</taxon>
    </lineage>
</organism>
<accession>A0A0S6XAW4</accession>
<feature type="chain" id="PRO_0000454568" description="2-oxoglutarate-dependent dioxygenase frbA">
    <location>
        <begin position="1"/>
        <end position="337"/>
    </location>
</feature>
<feature type="domain" description="Fe2OG dioxygenase" evidence="1">
    <location>
        <begin position="175"/>
        <end position="290"/>
    </location>
</feature>
<feature type="binding site" evidence="1">
    <location>
        <position position="202"/>
    </location>
    <ligand>
        <name>Fe cation</name>
        <dbReference type="ChEBI" id="CHEBI:24875"/>
    </ligand>
</feature>
<feature type="binding site" evidence="1">
    <location>
        <position position="204"/>
    </location>
    <ligand>
        <name>Fe cation</name>
        <dbReference type="ChEBI" id="CHEBI:24875"/>
    </ligand>
</feature>
<feature type="binding site" evidence="1">
    <location>
        <position position="262"/>
    </location>
    <ligand>
        <name>Fe cation</name>
        <dbReference type="ChEBI" id="CHEBI:24875"/>
    </ligand>
</feature>
<feature type="binding site" evidence="1">
    <location>
        <position position="281"/>
    </location>
    <ligand>
        <name>2-oxoglutarate</name>
        <dbReference type="ChEBI" id="CHEBI:16810"/>
    </ligand>
</feature>
<protein>
    <recommendedName>
        <fullName evidence="5">2-oxoglutarate-dependent dioxygenase frbA</fullName>
        <ecNumber evidence="7">1.14.-.-</ecNumber>
    </recommendedName>
    <alternativeName>
        <fullName evidence="5">FR901469 biosynthesis cluster protein A</fullName>
    </alternativeName>
</protein>
<comment type="function">
    <text evidence="4 7">2-oxoglutarate-dependent dioxygenase; part of the gene cluster that mediates the biosynthesis of the antifungal antibiotic FR901469, an inhibitor of beta-1,3-glucansynthase, exerting antifungal activity against the pathogenes Candida albicans and Aspergillus fumigatus (PubMed:27660098). FR901469 is a cyclic depsipeptide containing 12 amino acid residues and a fatty acid chain (PubMed:27660098). The NRPS frbI contains 12 modules responsible for the formation of the depsipeptide backbone which is denoted as Acyl-Thr-Ala-Tyr-Val-4OHPro-Thr-Thr-3OHPro-threo3OHGln-Gly-Thr-Orn-OH (C71H116N14O23) (Probable). The PKS frbB is probably involved in the production of the hydrocarbon chain, and the acyl-CoA ligase frbC might be involved in the transport of the chain to the peptide ptoduct of frbI (Probable). Because FR901469 contains 3 hydroxylated amino acid residues, the 3 oxygenases frbA, frbH, and frbJ might be participating in amino acid hydroxylation (Probable). As no thioesterase domains were detected in frbI or frbB, the thioesterases frbD and frbE may instead release and cyclize the products of the NRPS and PKS, respectively (Probable).</text>
</comment>
<comment type="cofactor">
    <cofactor evidence="1">
        <name>Fe(2+)</name>
        <dbReference type="ChEBI" id="CHEBI:29033"/>
    </cofactor>
    <text evidence="1">Binds 1 Fe(2+) ion per subunit.</text>
</comment>
<comment type="pathway">
    <text evidence="7">Antifungal biosynthesis.</text>
</comment>
<comment type="induction">
    <text evidence="4">Expression is positively regulated by the cluster-specific transcription factor frbF.</text>
</comment>
<comment type="biotechnology">
    <text evidence="2 3">FR901469 inhibits the activity of 1,3-beta-glucan synthase from Candida albicans and Aspergillus fumigatus (PubMed:11099224, PubMed:11099225). With minimal inhibitory concentrations (MICs) against Candida albicans and Aspergillus fumigatus of 0.63 ug/ml and 0.16 ug/ml, repectively, FR901469 displays greater inhibitory activity than other 1,3-beta-glucan synthase inhibitors such as, WF11899A, echinocandin B, aculeacin A, and papulacandin B (PubMed:11099224, PubMed:11099225).</text>
</comment>
<comment type="similarity">
    <text evidence="6">Belongs to the iron/ascorbate-dependent oxidoreductase family.</text>
</comment>
<name>FRBA_DOTX1</name>
<gene>
    <name evidence="5" type="primary">frbA</name>
    <name type="ORF">ANO11243_029850</name>
</gene>
<dbReference type="EC" id="1.14.-.-" evidence="7"/>
<dbReference type="EMBL" id="DF938583">
    <property type="protein sequence ID" value="GAM84982.1"/>
    <property type="molecule type" value="Genomic_DNA"/>
</dbReference>
<dbReference type="SMR" id="A0A0S6XAW4"/>
<dbReference type="STRING" id="1603295.A0A0S6XAW4"/>
<dbReference type="OrthoDB" id="288590at2759"/>
<dbReference type="Proteomes" id="UP000054361">
    <property type="component" value="Unassembled WGS sequence"/>
</dbReference>
<dbReference type="GO" id="GO:0051213">
    <property type="term" value="F:dioxygenase activity"/>
    <property type="evidence" value="ECO:0007669"/>
    <property type="project" value="UniProtKB-KW"/>
</dbReference>
<dbReference type="GO" id="GO:0046872">
    <property type="term" value="F:metal ion binding"/>
    <property type="evidence" value="ECO:0007669"/>
    <property type="project" value="UniProtKB-KW"/>
</dbReference>
<dbReference type="GO" id="GO:0044283">
    <property type="term" value="P:small molecule biosynthetic process"/>
    <property type="evidence" value="ECO:0007669"/>
    <property type="project" value="UniProtKB-ARBA"/>
</dbReference>
<dbReference type="Gene3D" id="2.60.120.330">
    <property type="entry name" value="B-lactam Antibiotic, Isopenicillin N Synthase, Chain"/>
    <property type="match status" value="1"/>
</dbReference>
<dbReference type="InterPro" id="IPR026992">
    <property type="entry name" value="DIOX_N"/>
</dbReference>
<dbReference type="InterPro" id="IPR044861">
    <property type="entry name" value="IPNS-like_FE2OG_OXY"/>
</dbReference>
<dbReference type="InterPro" id="IPR027443">
    <property type="entry name" value="IPNS-like_sf"/>
</dbReference>
<dbReference type="InterPro" id="IPR050231">
    <property type="entry name" value="Iron_ascorbate_oxido_reductase"/>
</dbReference>
<dbReference type="InterPro" id="IPR005123">
    <property type="entry name" value="Oxoglu/Fe-dep_dioxygenase_dom"/>
</dbReference>
<dbReference type="PANTHER" id="PTHR47990">
    <property type="entry name" value="2-OXOGLUTARATE (2OG) AND FE(II)-DEPENDENT OXYGENASE SUPERFAMILY PROTEIN-RELATED"/>
    <property type="match status" value="1"/>
</dbReference>
<dbReference type="Pfam" id="PF03171">
    <property type="entry name" value="2OG-FeII_Oxy"/>
    <property type="match status" value="1"/>
</dbReference>
<dbReference type="Pfam" id="PF14226">
    <property type="entry name" value="DIOX_N"/>
    <property type="match status" value="1"/>
</dbReference>
<dbReference type="SUPFAM" id="SSF51197">
    <property type="entry name" value="Clavaminate synthase-like"/>
    <property type="match status" value="1"/>
</dbReference>
<dbReference type="PROSITE" id="PS51471">
    <property type="entry name" value="FE2OG_OXY"/>
    <property type="match status" value="1"/>
</dbReference>
<reference key="1">
    <citation type="journal article" date="2015" name="Genome Announc.">
        <title>Genome sequence of fungal species No.11243, which produces the antifungal antibiotic FR901469.</title>
        <authorList>
            <person name="Matsui M."/>
            <person name="Yokoyama T."/>
            <person name="Nemoto K."/>
            <person name="Kumagai T."/>
            <person name="Terai G."/>
            <person name="Arita M."/>
            <person name="Machida M."/>
            <person name="Shibata T."/>
        </authorList>
    </citation>
    <scope>NUCLEOTIDE SEQUENCE [LARGE SCALE GENOMIC DNA]</scope>
</reference>
<reference key="2">
    <citation type="journal article" date="2000" name="J. Antibiot.">
        <title>FR901469, a novel antifungal antibiotic from an unidentified fungus No.11243. I. Taxonomy, fermentation, isolation, physico-chemical properties and biological properties.</title>
        <authorList>
            <person name="Fujie A."/>
            <person name="Iwamoto T."/>
            <person name="Muramatsu H."/>
            <person name="Okudaira T."/>
            <person name="Nitta K."/>
            <person name="Nakanishi T."/>
            <person name="Sakamoto K."/>
            <person name="Hori Y."/>
            <person name="Hino M."/>
            <person name="Hashimoto S."/>
            <person name="Okuhara M."/>
        </authorList>
    </citation>
    <scope>BIOTECHNOLOGY</scope>
</reference>
<reference key="3">
    <citation type="journal article" date="2000" name="J. Antibiot.">
        <title>FR901469, a novel antifungal antibiotic from an unidentified fungus No.11243. II. In vitro and in vivo activities.</title>
        <authorList>
            <person name="Fujie A."/>
            <person name="Iwamoto T."/>
            <person name="Muramatsu H."/>
            <person name="Okudaira T."/>
            <person name="Sato I."/>
            <person name="Furuta T."/>
            <person name="Tsurumi Y."/>
            <person name="Hori Y."/>
            <person name="Hino M."/>
            <person name="Hashimoto S."/>
            <person name="Okuhara M."/>
        </authorList>
    </citation>
    <scope>BIOTECHNOLOGY</scope>
</reference>
<reference key="4">
    <citation type="journal article" date="2017" name="J. Biosci. Bioeng.">
        <title>Identification of a putative FR901469 biosynthesis gene cluster in fungal sp. No. 11243 and enhancement of the productivity by overexpressing the transcription factor gene frbF.</title>
        <authorList>
            <person name="Matsui M."/>
            <person name="Yokoyama T."/>
            <person name="Nemoto K."/>
            <person name="Kumagai T."/>
            <person name="Terai G."/>
            <person name="Tamano K."/>
            <person name="Machida M."/>
            <person name="Shibata T."/>
        </authorList>
    </citation>
    <scope>FUNCTION</scope>
    <scope>INDUCTION</scope>
    <scope>PATHWAY</scope>
</reference>
<sequence length="337" mass="37730">MSIPSLDYRLFSHGDPAQRQQFCEDLVKTFAGYGFAKLRNHGLSDERVDEAFSYSNKFFNLPLHIKQKAKHPEAPNPHRGYSGVGQEKISAITGFEKGERSEVRAAELRESWDQGPADDELYANRWMPDEDLPGYRSFMESFFVECQTLHQSLLQCIATGLSLPSDELSSRCAKCSAELRLNHYPATPASSLASGACRISPHSDFGTITLLFQDSVGGLQVEDQQNPGVFLPVEPDDVHEMIINVGDCLSRWTDGRLRSVNHRVVSPTRLPGDADVMIPERHSLAYFGKPSRDEVVDSLPLFVPEGCKPKFADRWTALEYNQSKLMRTYNVETAAQG</sequence>
<keyword id="KW-0223">Dioxygenase</keyword>
<keyword id="KW-0408">Iron</keyword>
<keyword id="KW-0479">Metal-binding</keyword>
<keyword id="KW-0560">Oxidoreductase</keyword>
<keyword id="KW-1185">Reference proteome</keyword>
<evidence type="ECO:0000255" key="1">
    <source>
        <dbReference type="PROSITE-ProRule" id="PRU00805"/>
    </source>
</evidence>
<evidence type="ECO:0000269" key="2">
    <source>
    </source>
</evidence>
<evidence type="ECO:0000269" key="3">
    <source>
    </source>
</evidence>
<evidence type="ECO:0000269" key="4">
    <source>
    </source>
</evidence>
<evidence type="ECO:0000303" key="5">
    <source>
    </source>
</evidence>
<evidence type="ECO:0000305" key="6"/>
<evidence type="ECO:0000305" key="7">
    <source>
    </source>
</evidence>